<keyword id="KW-0963">Cytoplasm</keyword>
<keyword id="KW-0227">DNA damage</keyword>
<keyword id="KW-0234">DNA repair</keyword>
<keyword id="KW-0378">Hydrolase</keyword>
<keyword id="KW-1185">Reference proteome</keyword>
<name>UNG_CHLTR</name>
<accession>O84613</accession>
<reference key="1">
    <citation type="journal article" date="1998" name="Science">
        <title>Genome sequence of an obligate intracellular pathogen of humans: Chlamydia trachomatis.</title>
        <authorList>
            <person name="Stephens R.S."/>
            <person name="Kalman S."/>
            <person name="Lammel C.J."/>
            <person name="Fan J."/>
            <person name="Marathe R."/>
            <person name="Aravind L."/>
            <person name="Mitchell W.P."/>
            <person name="Olinger L."/>
            <person name="Tatusov R.L."/>
            <person name="Zhao Q."/>
            <person name="Koonin E.V."/>
            <person name="Davis R.W."/>
        </authorList>
    </citation>
    <scope>NUCLEOTIDE SEQUENCE [LARGE SCALE GENOMIC DNA]</scope>
    <source>
        <strain>ATCC VR-885 / DSM 19411 / UW-3/Cx</strain>
    </source>
</reference>
<feature type="chain" id="PRO_0000176084" description="Uracil-DNA glycosylase">
    <location>
        <begin position="1"/>
        <end position="229"/>
    </location>
</feature>
<feature type="active site" description="Proton acceptor" evidence="1">
    <location>
        <position position="70"/>
    </location>
</feature>
<proteinExistence type="inferred from homology"/>
<organism>
    <name type="scientific">Chlamydia trachomatis serovar D (strain ATCC VR-885 / DSM 19411 / UW-3/Cx)</name>
    <dbReference type="NCBI Taxonomy" id="272561"/>
    <lineage>
        <taxon>Bacteria</taxon>
        <taxon>Pseudomonadati</taxon>
        <taxon>Chlamydiota</taxon>
        <taxon>Chlamydiia</taxon>
        <taxon>Chlamydiales</taxon>
        <taxon>Chlamydiaceae</taxon>
        <taxon>Chlamydia/Chlamydophila group</taxon>
        <taxon>Chlamydia</taxon>
    </lineage>
</organism>
<evidence type="ECO:0000250" key="1"/>
<evidence type="ECO:0000305" key="2"/>
<sequence>MHEAFTIEQLPPSWQEQLKDEWSQPYWSQLLAFLKSEYAQATIYPKKENVFAALQSTPFDQVRVVILGQDPYHGEGQAHGLSFSVPRGQALPPSLRNIFQELHTDLGIRNESGCLQAWADQGVLLLNTVLTVRAGEAFSHAGRGWERFTDAIVTKLIQNRTHVIFVLWGNAARQKCNLLFQTKHQHAVLACPHPSPLAAHRGFFGCCHFSKINYLLKKQGKTMINWKIE</sequence>
<gene>
    <name type="primary">ung</name>
    <name type="ordered locus">CT_607</name>
</gene>
<dbReference type="EC" id="3.2.2.27"/>
<dbReference type="EMBL" id="AE001273">
    <property type="protein sequence ID" value="AAC68210.1"/>
    <property type="molecule type" value="Genomic_DNA"/>
</dbReference>
<dbReference type="PIR" id="C71493">
    <property type="entry name" value="C71493"/>
</dbReference>
<dbReference type="RefSeq" id="NP_220124.1">
    <property type="nucleotide sequence ID" value="NC_000117.1"/>
</dbReference>
<dbReference type="RefSeq" id="WP_009871975.1">
    <property type="nucleotide sequence ID" value="NC_000117.1"/>
</dbReference>
<dbReference type="SMR" id="O84613"/>
<dbReference type="FunCoup" id="O84613">
    <property type="interactions" value="189"/>
</dbReference>
<dbReference type="STRING" id="272561.CT_607"/>
<dbReference type="EnsemblBacteria" id="AAC68210">
    <property type="protein sequence ID" value="AAC68210"/>
    <property type="gene ID" value="CT_607"/>
</dbReference>
<dbReference type="GeneID" id="884388"/>
<dbReference type="KEGG" id="ctr:CT_607"/>
<dbReference type="PATRIC" id="fig|272561.5.peg.664"/>
<dbReference type="HOGENOM" id="CLU_032162_3_0_0"/>
<dbReference type="InParanoid" id="O84613"/>
<dbReference type="OrthoDB" id="9804372at2"/>
<dbReference type="Proteomes" id="UP000000431">
    <property type="component" value="Chromosome"/>
</dbReference>
<dbReference type="GO" id="GO:0005737">
    <property type="term" value="C:cytoplasm"/>
    <property type="evidence" value="ECO:0007669"/>
    <property type="project" value="UniProtKB-SubCell"/>
</dbReference>
<dbReference type="GO" id="GO:0004844">
    <property type="term" value="F:uracil DNA N-glycosylase activity"/>
    <property type="evidence" value="ECO:0007669"/>
    <property type="project" value="UniProtKB-UniRule"/>
</dbReference>
<dbReference type="GO" id="GO:0097510">
    <property type="term" value="P:base-excision repair, AP site formation via deaminated base removal"/>
    <property type="evidence" value="ECO:0000318"/>
    <property type="project" value="GO_Central"/>
</dbReference>
<dbReference type="CDD" id="cd10027">
    <property type="entry name" value="UDG-F1-like"/>
    <property type="match status" value="1"/>
</dbReference>
<dbReference type="FunFam" id="3.40.470.10:FF:000008">
    <property type="entry name" value="Uracil-DNA glycosylase"/>
    <property type="match status" value="1"/>
</dbReference>
<dbReference type="Gene3D" id="3.40.470.10">
    <property type="entry name" value="Uracil-DNA glycosylase-like domain"/>
    <property type="match status" value="1"/>
</dbReference>
<dbReference type="HAMAP" id="MF_00148">
    <property type="entry name" value="UDG"/>
    <property type="match status" value="1"/>
</dbReference>
<dbReference type="InterPro" id="IPR002043">
    <property type="entry name" value="UDG_fam1"/>
</dbReference>
<dbReference type="InterPro" id="IPR018085">
    <property type="entry name" value="Ura-DNA_Glyclase_AS"/>
</dbReference>
<dbReference type="InterPro" id="IPR005122">
    <property type="entry name" value="Uracil-DNA_glycosylase-like"/>
</dbReference>
<dbReference type="InterPro" id="IPR036895">
    <property type="entry name" value="Uracil-DNA_glycosylase-like_sf"/>
</dbReference>
<dbReference type="NCBIfam" id="NF003588">
    <property type="entry name" value="PRK05254.1-1"/>
    <property type="match status" value="1"/>
</dbReference>
<dbReference type="NCBIfam" id="NF003589">
    <property type="entry name" value="PRK05254.1-2"/>
    <property type="match status" value="1"/>
</dbReference>
<dbReference type="NCBIfam" id="NF003591">
    <property type="entry name" value="PRK05254.1-4"/>
    <property type="match status" value="1"/>
</dbReference>
<dbReference type="NCBIfam" id="NF003592">
    <property type="entry name" value="PRK05254.1-5"/>
    <property type="match status" value="1"/>
</dbReference>
<dbReference type="NCBIfam" id="TIGR00628">
    <property type="entry name" value="ung"/>
    <property type="match status" value="1"/>
</dbReference>
<dbReference type="PANTHER" id="PTHR11264">
    <property type="entry name" value="URACIL-DNA GLYCOSYLASE"/>
    <property type="match status" value="1"/>
</dbReference>
<dbReference type="PANTHER" id="PTHR11264:SF0">
    <property type="entry name" value="URACIL-DNA GLYCOSYLASE"/>
    <property type="match status" value="1"/>
</dbReference>
<dbReference type="Pfam" id="PF03167">
    <property type="entry name" value="UDG"/>
    <property type="match status" value="1"/>
</dbReference>
<dbReference type="SMART" id="SM00986">
    <property type="entry name" value="UDG"/>
    <property type="match status" value="1"/>
</dbReference>
<dbReference type="SMART" id="SM00987">
    <property type="entry name" value="UreE_C"/>
    <property type="match status" value="1"/>
</dbReference>
<dbReference type="SUPFAM" id="SSF52141">
    <property type="entry name" value="Uracil-DNA glycosylase-like"/>
    <property type="match status" value="1"/>
</dbReference>
<dbReference type="PROSITE" id="PS00130">
    <property type="entry name" value="U_DNA_GLYCOSYLASE"/>
    <property type="match status" value="1"/>
</dbReference>
<comment type="function">
    <text evidence="1">Excises uracil residues from the DNA which can arise as a result of misincorporation of dUMP residues by DNA polymerase or due to deamination of cytosine.</text>
</comment>
<comment type="catalytic activity">
    <reaction>
        <text>Hydrolyzes single-stranded DNA or mismatched double-stranded DNA and polynucleotides, releasing free uracil.</text>
        <dbReference type="EC" id="3.2.2.27"/>
    </reaction>
</comment>
<comment type="subcellular location">
    <subcellularLocation>
        <location evidence="1">Cytoplasm</location>
    </subcellularLocation>
</comment>
<comment type="similarity">
    <text evidence="2">Belongs to the uracil-DNA glycosylase (UDG) superfamily. UNG family.</text>
</comment>
<protein>
    <recommendedName>
        <fullName>Uracil-DNA glycosylase</fullName>
        <shortName>UDG</shortName>
        <ecNumber>3.2.2.27</ecNumber>
    </recommendedName>
</protein>